<sequence length="272" mass="31337">MNKIFAAFKPKGLSSNAFLSTLKKKYKNKKAGYSGTLDPFAKGVLIVAFGQYTKLFRFLKKTPKTYKATLWLGVYSLSLDDQNIKEIQNIKEFDLANLKQIIDQMQGIISYTPPQFSAKRINGTRAYELAKKGIEANLKPCQMEVFDCKILSYNHPFLNIEITVSEGAYIRSYCELFARKLGINATLSSLERIKEGKFVYNNEKSLNVLKYINLKPNFIKDLNKLENGAKIFVEELEFHDEGDYYIETEKYFSIINIKENTVKYLLNKVEKC</sequence>
<keyword id="KW-0413">Isomerase</keyword>
<keyword id="KW-0819">tRNA processing</keyword>
<organism>
    <name type="scientific">Campylobacter jejuni (strain RM1221)</name>
    <dbReference type="NCBI Taxonomy" id="195099"/>
    <lineage>
        <taxon>Bacteria</taxon>
        <taxon>Pseudomonadati</taxon>
        <taxon>Campylobacterota</taxon>
        <taxon>Epsilonproteobacteria</taxon>
        <taxon>Campylobacterales</taxon>
        <taxon>Campylobacteraceae</taxon>
        <taxon>Campylobacter</taxon>
    </lineage>
</organism>
<name>TRUB_CAMJR</name>
<evidence type="ECO:0000255" key="1">
    <source>
        <dbReference type="HAMAP-Rule" id="MF_01080"/>
    </source>
</evidence>
<feature type="chain" id="PRO_0000121812" description="tRNA pseudouridine synthase B">
    <location>
        <begin position="1"/>
        <end position="272"/>
    </location>
</feature>
<feature type="active site" description="Nucleophile" evidence="1">
    <location>
        <position position="38"/>
    </location>
</feature>
<dbReference type="EC" id="5.4.99.25" evidence="1"/>
<dbReference type="EMBL" id="CP000025">
    <property type="protein sequence ID" value="AAW35567.1"/>
    <property type="molecule type" value="Genomic_DNA"/>
</dbReference>
<dbReference type="RefSeq" id="WP_002852653.1">
    <property type="nucleotide sequence ID" value="NC_003912.7"/>
</dbReference>
<dbReference type="SMR" id="Q5HU02"/>
<dbReference type="KEGG" id="cjr:CJE1245"/>
<dbReference type="HOGENOM" id="CLU_032087_2_0_7"/>
<dbReference type="GO" id="GO:0003723">
    <property type="term" value="F:RNA binding"/>
    <property type="evidence" value="ECO:0007669"/>
    <property type="project" value="InterPro"/>
</dbReference>
<dbReference type="GO" id="GO:0160148">
    <property type="term" value="F:tRNA pseudouridine(55) synthase activity"/>
    <property type="evidence" value="ECO:0007669"/>
    <property type="project" value="UniProtKB-EC"/>
</dbReference>
<dbReference type="GO" id="GO:1990481">
    <property type="term" value="P:mRNA pseudouridine synthesis"/>
    <property type="evidence" value="ECO:0007669"/>
    <property type="project" value="TreeGrafter"/>
</dbReference>
<dbReference type="GO" id="GO:0031119">
    <property type="term" value="P:tRNA pseudouridine synthesis"/>
    <property type="evidence" value="ECO:0007669"/>
    <property type="project" value="UniProtKB-UniRule"/>
</dbReference>
<dbReference type="Gene3D" id="3.30.2350.10">
    <property type="entry name" value="Pseudouridine synthase"/>
    <property type="match status" value="1"/>
</dbReference>
<dbReference type="HAMAP" id="MF_01080">
    <property type="entry name" value="TruB_bact"/>
    <property type="match status" value="1"/>
</dbReference>
<dbReference type="InterPro" id="IPR020103">
    <property type="entry name" value="PsdUridine_synth_cat_dom_sf"/>
</dbReference>
<dbReference type="InterPro" id="IPR002501">
    <property type="entry name" value="PsdUridine_synth_N"/>
</dbReference>
<dbReference type="InterPro" id="IPR014780">
    <property type="entry name" value="tRNA_psdUridine_synth_TruB"/>
</dbReference>
<dbReference type="NCBIfam" id="TIGR00431">
    <property type="entry name" value="TruB"/>
    <property type="match status" value="1"/>
</dbReference>
<dbReference type="PANTHER" id="PTHR13767:SF2">
    <property type="entry name" value="PSEUDOURIDYLATE SYNTHASE TRUB1"/>
    <property type="match status" value="1"/>
</dbReference>
<dbReference type="PANTHER" id="PTHR13767">
    <property type="entry name" value="TRNA-PSEUDOURIDINE SYNTHASE"/>
    <property type="match status" value="1"/>
</dbReference>
<dbReference type="Pfam" id="PF01509">
    <property type="entry name" value="TruB_N"/>
    <property type="match status" value="1"/>
</dbReference>
<dbReference type="SUPFAM" id="SSF55120">
    <property type="entry name" value="Pseudouridine synthase"/>
    <property type="match status" value="1"/>
</dbReference>
<protein>
    <recommendedName>
        <fullName evidence="1">tRNA pseudouridine synthase B</fullName>
        <ecNumber evidence="1">5.4.99.25</ecNumber>
    </recommendedName>
    <alternativeName>
        <fullName evidence="1">tRNA pseudouridine(55) synthase</fullName>
        <shortName evidence="1">Psi55 synthase</shortName>
    </alternativeName>
    <alternativeName>
        <fullName evidence="1">tRNA pseudouridylate synthase</fullName>
    </alternativeName>
    <alternativeName>
        <fullName evidence="1">tRNA-uridine isomerase</fullName>
    </alternativeName>
</protein>
<reference key="1">
    <citation type="journal article" date="2005" name="PLoS Biol.">
        <title>Major structural differences and novel potential virulence mechanisms from the genomes of multiple Campylobacter species.</title>
        <authorList>
            <person name="Fouts D.E."/>
            <person name="Mongodin E.F."/>
            <person name="Mandrell R.E."/>
            <person name="Miller W.G."/>
            <person name="Rasko D.A."/>
            <person name="Ravel J."/>
            <person name="Brinkac L.M."/>
            <person name="DeBoy R.T."/>
            <person name="Parker C.T."/>
            <person name="Daugherty S.C."/>
            <person name="Dodson R.J."/>
            <person name="Durkin A.S."/>
            <person name="Madupu R."/>
            <person name="Sullivan S.A."/>
            <person name="Shetty J.U."/>
            <person name="Ayodeji M.A."/>
            <person name="Shvartsbeyn A."/>
            <person name="Schatz M.C."/>
            <person name="Badger J.H."/>
            <person name="Fraser C.M."/>
            <person name="Nelson K.E."/>
        </authorList>
    </citation>
    <scope>NUCLEOTIDE SEQUENCE [LARGE SCALE GENOMIC DNA]</scope>
    <source>
        <strain>RM1221</strain>
    </source>
</reference>
<accession>Q5HU02</accession>
<comment type="function">
    <text evidence="1">Responsible for synthesis of pseudouridine from uracil-55 in the psi GC loop of transfer RNAs.</text>
</comment>
<comment type="catalytic activity">
    <reaction evidence="1">
        <text>uridine(55) in tRNA = pseudouridine(55) in tRNA</text>
        <dbReference type="Rhea" id="RHEA:42532"/>
        <dbReference type="Rhea" id="RHEA-COMP:10101"/>
        <dbReference type="Rhea" id="RHEA-COMP:10102"/>
        <dbReference type="ChEBI" id="CHEBI:65314"/>
        <dbReference type="ChEBI" id="CHEBI:65315"/>
        <dbReference type="EC" id="5.4.99.25"/>
    </reaction>
</comment>
<comment type="similarity">
    <text evidence="1">Belongs to the pseudouridine synthase TruB family. Type 1 subfamily.</text>
</comment>
<gene>
    <name evidence="1" type="primary">truB</name>
    <name type="ordered locus">CJE1245</name>
</gene>
<proteinExistence type="inferred from homology"/>